<accession>P30835</accession>
<dbReference type="EC" id="2.7.1.11" evidence="5"/>
<dbReference type="EMBL" id="X58865">
    <property type="protein sequence ID" value="CAA41674.1"/>
    <property type="molecule type" value="mRNA"/>
</dbReference>
<dbReference type="PIR" id="S19689">
    <property type="entry name" value="S19689"/>
</dbReference>
<dbReference type="RefSeq" id="NP_037322.1">
    <property type="nucleotide sequence ID" value="NM_013190.4"/>
</dbReference>
<dbReference type="SMR" id="P30835"/>
<dbReference type="BioGRID" id="247769">
    <property type="interactions" value="2"/>
</dbReference>
<dbReference type="ComplexPortal" id="CPX-2051">
    <property type="entry name" value="6-phosphofructokinase, L4 homotetramer"/>
</dbReference>
<dbReference type="ComplexPortal" id="CPX-2058">
    <property type="entry name" value="6-phosphofructokinase, ML3 heterotetramer"/>
</dbReference>
<dbReference type="ComplexPortal" id="CPX-2059">
    <property type="entry name" value="6-phosphofructokinase, M2L2 heterotetramer"/>
</dbReference>
<dbReference type="ComplexPortal" id="CPX-2060">
    <property type="entry name" value="6-phosphofructokinase, M3L heterotetramer"/>
</dbReference>
<dbReference type="FunCoup" id="P30835">
    <property type="interactions" value="1748"/>
</dbReference>
<dbReference type="IntAct" id="P30835">
    <property type="interactions" value="1"/>
</dbReference>
<dbReference type="STRING" id="10116.ENSRNOP00000001625"/>
<dbReference type="BindingDB" id="P30835"/>
<dbReference type="ChEMBL" id="CHEMBL4739847"/>
<dbReference type="GlyCosmos" id="P30835">
    <property type="glycosylation" value="1 site, No reported glycans"/>
</dbReference>
<dbReference type="GlyGen" id="P30835">
    <property type="glycosylation" value="1 site"/>
</dbReference>
<dbReference type="iPTMnet" id="P30835"/>
<dbReference type="PhosphoSitePlus" id="P30835"/>
<dbReference type="jPOST" id="P30835"/>
<dbReference type="PaxDb" id="10116-ENSRNOP00000001625"/>
<dbReference type="Ensembl" id="ENSRNOT00000001625.6">
    <property type="protein sequence ID" value="ENSRNOP00000001625.3"/>
    <property type="gene ID" value="ENSRNOG00000001214.6"/>
</dbReference>
<dbReference type="GeneID" id="25741"/>
<dbReference type="KEGG" id="rno:25741"/>
<dbReference type="UCSC" id="RGD:3311">
    <property type="organism name" value="rat"/>
</dbReference>
<dbReference type="AGR" id="RGD:3311"/>
<dbReference type="CTD" id="5211"/>
<dbReference type="RGD" id="3311">
    <property type="gene designation" value="Pfkl"/>
</dbReference>
<dbReference type="eggNOG" id="KOG2440">
    <property type="taxonomic scope" value="Eukaryota"/>
</dbReference>
<dbReference type="GeneTree" id="ENSGT00940000159292"/>
<dbReference type="HOGENOM" id="CLU_011053_0_0_1"/>
<dbReference type="InParanoid" id="P30835"/>
<dbReference type="OMA" id="LMECVDM"/>
<dbReference type="OrthoDB" id="537915at2759"/>
<dbReference type="PhylomeDB" id="P30835"/>
<dbReference type="TreeFam" id="TF300411"/>
<dbReference type="Reactome" id="R-RNO-6798695">
    <property type="pathway name" value="Neutrophil degranulation"/>
</dbReference>
<dbReference type="Reactome" id="R-RNO-70171">
    <property type="pathway name" value="Glycolysis"/>
</dbReference>
<dbReference type="SABIO-RK" id="P30835"/>
<dbReference type="UniPathway" id="UPA00109">
    <property type="reaction ID" value="UER00182"/>
</dbReference>
<dbReference type="PRO" id="PR:P30835"/>
<dbReference type="Proteomes" id="UP000002494">
    <property type="component" value="Chromosome 20"/>
</dbReference>
<dbReference type="Bgee" id="ENSRNOG00000001214">
    <property type="expression patterns" value="Expressed in frontal cortex and 19 other cell types or tissues"/>
</dbReference>
<dbReference type="GO" id="GO:0005945">
    <property type="term" value="C:6-phosphofructokinase complex"/>
    <property type="evidence" value="ECO:0000266"/>
    <property type="project" value="RGD"/>
</dbReference>
<dbReference type="GO" id="GO:0005829">
    <property type="term" value="C:cytosol"/>
    <property type="evidence" value="ECO:0000266"/>
    <property type="project" value="RGD"/>
</dbReference>
<dbReference type="GO" id="GO:0016020">
    <property type="term" value="C:membrane"/>
    <property type="evidence" value="ECO:0000318"/>
    <property type="project" value="GO_Central"/>
</dbReference>
<dbReference type="GO" id="GO:0003872">
    <property type="term" value="F:6-phosphofructokinase activity"/>
    <property type="evidence" value="ECO:0000314"/>
    <property type="project" value="RGD"/>
</dbReference>
<dbReference type="GO" id="GO:0005524">
    <property type="term" value="F:ATP binding"/>
    <property type="evidence" value="ECO:0000314"/>
    <property type="project" value="RGD"/>
</dbReference>
<dbReference type="GO" id="GO:0070061">
    <property type="term" value="F:fructose binding"/>
    <property type="evidence" value="ECO:0000266"/>
    <property type="project" value="RGD"/>
</dbReference>
<dbReference type="GO" id="GO:0004331">
    <property type="term" value="F:fructose-2,6-bisphosphate 2-phosphatase activity"/>
    <property type="evidence" value="ECO:0000304"/>
    <property type="project" value="RGD"/>
</dbReference>
<dbReference type="GO" id="GO:0070095">
    <property type="term" value="F:fructose-6-phosphate binding"/>
    <property type="evidence" value="ECO:0000314"/>
    <property type="project" value="RGD"/>
</dbReference>
<dbReference type="GO" id="GO:0042802">
    <property type="term" value="F:identical protein binding"/>
    <property type="evidence" value="ECO:0000353"/>
    <property type="project" value="RGD"/>
</dbReference>
<dbReference type="GO" id="GO:0019900">
    <property type="term" value="F:kinase binding"/>
    <property type="evidence" value="ECO:0000266"/>
    <property type="project" value="RGD"/>
</dbReference>
<dbReference type="GO" id="GO:0046872">
    <property type="term" value="F:metal ion binding"/>
    <property type="evidence" value="ECO:0007669"/>
    <property type="project" value="UniProtKB-KW"/>
</dbReference>
<dbReference type="GO" id="GO:0048029">
    <property type="term" value="F:monosaccharide binding"/>
    <property type="evidence" value="ECO:0000314"/>
    <property type="project" value="RGD"/>
</dbReference>
<dbReference type="GO" id="GO:0061621">
    <property type="term" value="P:canonical glycolysis"/>
    <property type="evidence" value="ECO:0000318"/>
    <property type="project" value="GO_Central"/>
</dbReference>
<dbReference type="GO" id="GO:0030388">
    <property type="term" value="P:fructose 1,6-bisphosphate metabolic process"/>
    <property type="evidence" value="ECO:0000314"/>
    <property type="project" value="RGD"/>
</dbReference>
<dbReference type="GO" id="GO:0006002">
    <property type="term" value="P:fructose 6-phosphate metabolic process"/>
    <property type="evidence" value="ECO:0000314"/>
    <property type="project" value="RGD"/>
</dbReference>
<dbReference type="GO" id="GO:0006096">
    <property type="term" value="P:glycolytic process"/>
    <property type="evidence" value="ECO:0000314"/>
    <property type="project" value="RGD"/>
</dbReference>
<dbReference type="GO" id="GO:0061615">
    <property type="term" value="P:glycolytic process through fructose-6-phosphate"/>
    <property type="evidence" value="ECO:0000266"/>
    <property type="project" value="RGD"/>
</dbReference>
<dbReference type="GO" id="GO:0046676">
    <property type="term" value="P:negative regulation of insulin secretion"/>
    <property type="evidence" value="ECO:0000266"/>
    <property type="project" value="RGD"/>
</dbReference>
<dbReference type="GO" id="GO:0009749">
    <property type="term" value="P:response to glucose"/>
    <property type="evidence" value="ECO:0000250"/>
    <property type="project" value="UniProtKB"/>
</dbReference>
<dbReference type="CDD" id="cd00764">
    <property type="entry name" value="Eukaryotic_PFK"/>
    <property type="match status" value="1"/>
</dbReference>
<dbReference type="FunFam" id="3.40.50.460:FF:000001">
    <property type="entry name" value="ATP-dependent 6-phosphofructokinase"/>
    <property type="match status" value="1"/>
</dbReference>
<dbReference type="FunFam" id="3.40.50.460:FF:000003">
    <property type="entry name" value="ATP-dependent 6-phosphofructokinase"/>
    <property type="match status" value="1"/>
</dbReference>
<dbReference type="FunFam" id="3.40.50.450:FF:000043">
    <property type="entry name" value="ATP-dependent 6-phosphofructokinase, platelet type"/>
    <property type="match status" value="1"/>
</dbReference>
<dbReference type="Gene3D" id="3.40.50.450">
    <property type="match status" value="2"/>
</dbReference>
<dbReference type="Gene3D" id="3.40.50.460">
    <property type="entry name" value="Phosphofructokinase domain"/>
    <property type="match status" value="2"/>
</dbReference>
<dbReference type="HAMAP" id="MF_03184">
    <property type="entry name" value="Phosphofructokinase_I_E"/>
    <property type="match status" value="1"/>
</dbReference>
<dbReference type="InterPro" id="IPR009161">
    <property type="entry name" value="6-Pfructokinase_euk"/>
</dbReference>
<dbReference type="InterPro" id="IPR022953">
    <property type="entry name" value="ATP_PFK"/>
</dbReference>
<dbReference type="InterPro" id="IPR041914">
    <property type="entry name" value="PFK_vert-type"/>
</dbReference>
<dbReference type="InterPro" id="IPR015912">
    <property type="entry name" value="Phosphofructokinase_CS"/>
</dbReference>
<dbReference type="InterPro" id="IPR000023">
    <property type="entry name" value="Phosphofructokinase_dom"/>
</dbReference>
<dbReference type="InterPro" id="IPR035966">
    <property type="entry name" value="PKF_sf"/>
</dbReference>
<dbReference type="NCBIfam" id="TIGR02478">
    <property type="entry name" value="6PF1K_euk"/>
    <property type="match status" value="1"/>
</dbReference>
<dbReference type="PANTHER" id="PTHR13697:SF14">
    <property type="entry name" value="ATP-DEPENDENT 6-PHOSPHOFRUCTOKINASE, LIVER TYPE"/>
    <property type="match status" value="1"/>
</dbReference>
<dbReference type="PANTHER" id="PTHR13697">
    <property type="entry name" value="PHOSPHOFRUCTOKINASE"/>
    <property type="match status" value="1"/>
</dbReference>
<dbReference type="Pfam" id="PF00365">
    <property type="entry name" value="PFK"/>
    <property type="match status" value="2"/>
</dbReference>
<dbReference type="PIRSF" id="PIRSF000533">
    <property type="entry name" value="ATP_PFK_euk"/>
    <property type="match status" value="1"/>
</dbReference>
<dbReference type="PRINTS" id="PR00476">
    <property type="entry name" value="PHFRCTKINASE"/>
</dbReference>
<dbReference type="SUPFAM" id="SSF53784">
    <property type="entry name" value="Phosphofructokinase"/>
    <property type="match status" value="2"/>
</dbReference>
<dbReference type="PROSITE" id="PS00433">
    <property type="entry name" value="PHOSPHOFRUCTOKINASE"/>
    <property type="match status" value="2"/>
</dbReference>
<gene>
    <name type="primary">Pfkl</name>
    <name type="synonym">Pfk-l</name>
</gene>
<reference key="1">
    <citation type="journal article" date="1991" name="Eur. J. Biochem.">
        <title>Rat-liver-type phosphofructokinase mRNA. Structure, tissue distribution and regulation.</title>
        <authorList>
            <person name="Hotta K."/>
            <person name="Nakajima H."/>
            <person name="Yamasaki T."/>
            <person name="Hamaguchi T."/>
            <person name="Kuwajima M."/>
            <person name="Noguchi T."/>
            <person name="Tanaka T."/>
            <person name="Kono N."/>
            <person name="Tarui S."/>
        </authorList>
    </citation>
    <scope>NUCLEOTIDE SEQUENCE [MRNA]</scope>
    <source>
        <strain>Sprague-Dawley</strain>
        <tissue>Liver</tissue>
    </source>
</reference>
<reference key="2">
    <citation type="journal article" date="2012" name="Nat. Commun.">
        <title>Quantitative maps of protein phosphorylation sites across 14 different rat organs and tissues.</title>
        <authorList>
            <person name="Lundby A."/>
            <person name="Secher A."/>
            <person name="Lage K."/>
            <person name="Nordsborg N.B."/>
            <person name="Dmytriyev A."/>
            <person name="Lundby C."/>
            <person name="Olsen J.V."/>
        </authorList>
    </citation>
    <scope>PHOSPHORYLATION [LARGE SCALE ANALYSIS] AT SER-775</scope>
    <scope>IDENTIFICATION BY MASS SPECTROMETRY [LARGE SCALE ANALYSIS]</scope>
</reference>
<keyword id="KW-0007">Acetylation</keyword>
<keyword id="KW-0021">Allosteric enzyme</keyword>
<keyword id="KW-0067">ATP-binding</keyword>
<keyword id="KW-0963">Cytoplasm</keyword>
<keyword id="KW-0324">Glycolysis</keyword>
<keyword id="KW-0325">Glycoprotein</keyword>
<keyword id="KW-0418">Kinase</keyword>
<keyword id="KW-0460">Magnesium</keyword>
<keyword id="KW-0479">Metal-binding</keyword>
<keyword id="KW-0547">Nucleotide-binding</keyword>
<keyword id="KW-0597">Phosphoprotein</keyword>
<keyword id="KW-1185">Reference proteome</keyword>
<keyword id="KW-0808">Transferase</keyword>
<protein>
    <recommendedName>
        <fullName evidence="5">ATP-dependent 6-phosphofructokinase, liver type</fullName>
        <shortName evidence="5">ATP-PFK</shortName>
        <shortName>PFK-L</shortName>
        <ecNumber evidence="5">2.7.1.11</ecNumber>
    </recommendedName>
    <alternativeName>
        <fullName>6-phosphofructokinase type B</fullName>
    </alternativeName>
    <alternativeName>
        <fullName>Phosphofructo-1-kinase isozyme B</fullName>
        <shortName>PFK-B</shortName>
    </alternativeName>
    <alternativeName>
        <fullName evidence="5">Phosphohexokinase</fullName>
    </alternativeName>
</protein>
<proteinExistence type="evidence at protein level"/>
<comment type="function">
    <text evidence="2 5">Catalyzes the phosphorylation of D-fructose 6-phosphate to fructose 1,6-bisphosphate by ATP, the first committing step of glycolysis (By similarity). Negatively regulates the phagocyte oxidative burst in response to bacterial infection by controlling cellular NADPH biosynthesis and NADPH oxidase-derived reactive oxygen species. Upon macrophage activation, drives the metabolic switch toward glycolysis, thus preventing glucose turnover that produces NADPH via pentose phosphate pathway (By similarity).</text>
</comment>
<comment type="catalytic activity">
    <reaction evidence="5">
        <text>beta-D-fructose 6-phosphate + ATP = beta-D-fructose 1,6-bisphosphate + ADP + H(+)</text>
        <dbReference type="Rhea" id="RHEA:16109"/>
        <dbReference type="ChEBI" id="CHEBI:15378"/>
        <dbReference type="ChEBI" id="CHEBI:30616"/>
        <dbReference type="ChEBI" id="CHEBI:32966"/>
        <dbReference type="ChEBI" id="CHEBI:57634"/>
        <dbReference type="ChEBI" id="CHEBI:456216"/>
        <dbReference type="EC" id="2.7.1.11"/>
    </reaction>
</comment>
<comment type="cofactor">
    <cofactor>
        <name>Mg(2+)</name>
        <dbReference type="ChEBI" id="CHEBI:18420"/>
    </cofactor>
</comment>
<comment type="activity regulation">
    <text evidence="5">Allosterically activated by ADP, AMP, or fructose 2,6-bisphosphate, and allosterically inhibited by ATP or citrate. GlcNAcylation by OGT overcomes allosteric regulation (By similarity).</text>
</comment>
<comment type="pathway">
    <text evidence="5">Carbohydrate degradation; glycolysis; D-glyceraldehyde 3-phosphate and glycerone phosphate from D-glucose: step 3/4.</text>
</comment>
<comment type="subunit">
    <text evidence="5 6">Homo- and heterotetramers (By similarity). Phosphofructokinase (PFK) enzyme functions as a tetramer composed of different combinations of 3 types of subunits, called PFKM (M), PFKL (L) and PFKP (P). The composition of the PFK tetramer differs according to the tissue type it is present in. The kinetic and regulatory properties of the tetrameric enzyme are dependent on the subunit composition, hence can vary across tissues (Probable).</text>
</comment>
<comment type="subcellular location">
    <subcellularLocation>
        <location evidence="5">Cytoplasm</location>
    </subcellularLocation>
</comment>
<comment type="PTM">
    <text evidence="1">GlcNAcylation at Ser-529 by OGT decreases enzyme activity, leading to redirect glucose flux through the oxidative pentose phosphate pathway. Glycosylation is stimulated by both hypoxia and glucose deprivation (By similarity).</text>
</comment>
<comment type="similarity">
    <text evidence="5">Belongs to the phosphofructokinase type A (PFKA) family. ATP-dependent PFK group I subfamily. Eukaryotic two domain clade 'E' sub-subfamily.</text>
</comment>
<evidence type="ECO:0000250" key="1"/>
<evidence type="ECO:0000250" key="2">
    <source>
        <dbReference type="UniProtKB" id="P12382"/>
    </source>
</evidence>
<evidence type="ECO:0000250" key="3">
    <source>
        <dbReference type="UniProtKB" id="P17858"/>
    </source>
</evidence>
<evidence type="ECO:0000250" key="4">
    <source>
        <dbReference type="UniProtKB" id="P47857"/>
    </source>
</evidence>
<evidence type="ECO:0000255" key="5">
    <source>
        <dbReference type="HAMAP-Rule" id="MF_03184"/>
    </source>
</evidence>
<evidence type="ECO:0000305" key="6"/>
<evidence type="ECO:0007744" key="7">
    <source>
    </source>
</evidence>
<sequence>MATVDLEKLRMSGAGKAIGVLTSGGDAQGMNAAVRAVTRMGIYVGAKVFLIYEGYEGLVEGGENIKPANWLSVSNIIQLGGTIIGSARCKAFTTREGRLAAAYNLLQHGITNLCVIGGDGSLTGANIFRNEWGSLLEELVKEGKISESTAQNYAHLSIAGLVGSIDNDFCGTDMTIGTDSALHRIMEVIDAITTTAQSHQRTFVLEVMGRHCGYLALVSALASGADWLFIPEAPPEDGWENFMCERLGETRSRGSRLNIIIIAEGAIDRHGKPISSSYVKDLVVQRLGFDTRVTVLGHVQRGGTPSAFDRVLSSKMGMEAVMALLEATPDTPACVVSLSGNQSVRLPLMECVQVTKDVQKAMDEKRFDEAIQLRGRSFENNWKIYKLLAHQKVSKEKSNFSLAILNVGAPAAGMNAAVRSAVRTGISEGHTVYVVHDGFEGLAKGQVQEVGWHDVAGWLGRGGSMLGTKRTLPKPHLEAIVENLRTYNIHALLVIGGFEAYEGVLQLVEARGRYEELCIVMCVIPATISNNVPGTDFSLGSDTAVNAAMESCDRIKQSASGTKRRVFIVETMGGYCGYLATVTGIAVGADAAYVFEDPFNIHDLKANVEHMTEKMKTDIQRGLVLRNEKCHEHYTTEFLYNLYSSEGRGVFDCRTNVLGHLQQGGAPTPFDRNYGTKLGVKAMLWMSEKLRDVYRKGRVFANAPDSACVIGLRKKVVAFSSVTELKKETDFEHRMPREQWWLNLRLMLKMLAHYRISMADYVSGELEHVTRRTLSIDKGF</sequence>
<feature type="initiator methionine" description="Removed" evidence="3">
    <location>
        <position position="1"/>
    </location>
</feature>
<feature type="chain" id="PRO_0000112023" description="ATP-dependent 6-phosphofructokinase, liver type">
    <location>
        <begin position="2"/>
        <end position="780"/>
    </location>
</feature>
<feature type="region of interest" description="N-terminal catalytic PFK domain 1">
    <location>
        <begin position="2"/>
        <end position="390"/>
    </location>
</feature>
<feature type="region of interest" description="Interdomain linker">
    <location>
        <begin position="391"/>
        <end position="400"/>
    </location>
</feature>
<feature type="region of interest" description="C-terminal regulatory PFK domain 2">
    <location>
        <begin position="401"/>
        <end position="780"/>
    </location>
</feature>
<feature type="active site" description="Proton acceptor" evidence="5">
    <location>
        <position position="166"/>
    </location>
</feature>
<feature type="binding site" evidence="5">
    <location>
        <position position="25"/>
    </location>
    <ligand>
        <name>ATP</name>
        <dbReference type="ChEBI" id="CHEBI:30616"/>
    </ligand>
</feature>
<feature type="binding site" evidence="5">
    <location>
        <begin position="88"/>
        <end position="89"/>
    </location>
    <ligand>
        <name>ATP</name>
        <dbReference type="ChEBI" id="CHEBI:30616"/>
    </ligand>
</feature>
<feature type="binding site" evidence="5">
    <location>
        <begin position="118"/>
        <end position="121"/>
    </location>
    <ligand>
        <name>ATP</name>
        <dbReference type="ChEBI" id="CHEBI:30616"/>
    </ligand>
</feature>
<feature type="binding site" evidence="5">
    <location>
        <position position="119"/>
    </location>
    <ligand>
        <name>Mg(2+)</name>
        <dbReference type="ChEBI" id="CHEBI:18420"/>
        <note>catalytic</note>
    </ligand>
</feature>
<feature type="binding site" description="in other chain" evidence="5">
    <location>
        <begin position="164"/>
        <end position="166"/>
    </location>
    <ligand>
        <name>substrate</name>
        <note>ligand shared between dimeric partners</note>
    </ligand>
</feature>
<feature type="binding site" evidence="5">
    <location>
        <position position="201"/>
    </location>
    <ligand>
        <name>substrate</name>
        <note>ligand shared between dimeric partners</note>
    </ligand>
</feature>
<feature type="binding site" description="in other chain" evidence="5">
    <location>
        <begin position="208"/>
        <end position="210"/>
    </location>
    <ligand>
        <name>substrate</name>
        <note>ligand shared between dimeric partners</note>
    </ligand>
</feature>
<feature type="binding site" description="in other chain" evidence="5">
    <location>
        <position position="264"/>
    </location>
    <ligand>
        <name>substrate</name>
        <note>ligand shared between dimeric partners</note>
    </ligand>
</feature>
<feature type="binding site" evidence="5">
    <location>
        <position position="292"/>
    </location>
    <ligand>
        <name>substrate</name>
        <note>ligand shared between dimeric partners</note>
    </ligand>
</feature>
<feature type="binding site" description="in other chain" evidence="5">
    <location>
        <begin position="298"/>
        <end position="301"/>
    </location>
    <ligand>
        <name>substrate</name>
        <note>ligand shared between dimeric partners</note>
    </ligand>
</feature>
<feature type="binding site" description="in other chain" evidence="5">
    <location>
        <position position="470"/>
    </location>
    <ligand>
        <name>beta-D-fructose 2,6-bisphosphate</name>
        <dbReference type="ChEBI" id="CHEBI:58579"/>
        <note>allosteric activator; ligand shared between dimeric partners</note>
    </ligand>
</feature>
<feature type="binding site" description="in other chain" evidence="5">
    <location>
        <begin position="527"/>
        <end position="531"/>
    </location>
    <ligand>
        <name>beta-D-fructose 2,6-bisphosphate</name>
        <dbReference type="ChEBI" id="CHEBI:58579"/>
        <note>allosteric activator; ligand shared between dimeric partners</note>
    </ligand>
</feature>
<feature type="binding site" evidence="5">
    <location>
        <position position="565"/>
    </location>
    <ligand>
        <name>beta-D-fructose 2,6-bisphosphate</name>
        <dbReference type="ChEBI" id="CHEBI:58579"/>
        <note>allosteric activator; ligand shared between dimeric partners</note>
    </ligand>
</feature>
<feature type="binding site" description="in other chain" evidence="5">
    <location>
        <begin position="572"/>
        <end position="574"/>
    </location>
    <ligand>
        <name>beta-D-fructose 2,6-bisphosphate</name>
        <dbReference type="ChEBI" id="CHEBI:58579"/>
        <note>allosteric activator; ligand shared between dimeric partners</note>
    </ligand>
</feature>
<feature type="binding site" description="in other chain" evidence="5">
    <location>
        <position position="628"/>
    </location>
    <ligand>
        <name>beta-D-fructose 2,6-bisphosphate</name>
        <dbReference type="ChEBI" id="CHEBI:58579"/>
        <note>allosteric activator; ligand shared between dimeric partners</note>
    </ligand>
</feature>
<feature type="binding site" evidence="5">
    <location>
        <position position="654"/>
    </location>
    <ligand>
        <name>beta-D-fructose 2,6-bisphosphate</name>
        <dbReference type="ChEBI" id="CHEBI:58579"/>
        <note>allosteric activator; ligand shared between dimeric partners</note>
    </ligand>
</feature>
<feature type="binding site" description="in other chain" evidence="5">
    <location>
        <begin position="660"/>
        <end position="663"/>
    </location>
    <ligand>
        <name>beta-D-fructose 2,6-bisphosphate</name>
        <dbReference type="ChEBI" id="CHEBI:58579"/>
        <note>allosteric activator; ligand shared between dimeric partners</note>
    </ligand>
</feature>
<feature type="binding site" description="in other chain" evidence="5">
    <location>
        <position position="734"/>
    </location>
    <ligand>
        <name>beta-D-fructose 2,6-bisphosphate</name>
        <dbReference type="ChEBI" id="CHEBI:58579"/>
        <note>allosteric activator; ligand shared between dimeric partners</note>
    </ligand>
</feature>
<feature type="modified residue" description="N-acetylalanine" evidence="3">
    <location>
        <position position="2"/>
    </location>
</feature>
<feature type="modified residue" description="Phosphoserine" evidence="4">
    <location>
        <position position="377"/>
    </location>
</feature>
<feature type="modified residue" description="Phosphotyrosine" evidence="2">
    <location>
        <position position="640"/>
    </location>
</feature>
<feature type="modified residue" description="Phosphoserine" evidence="7">
    <location>
        <position position="775"/>
    </location>
</feature>
<feature type="glycosylation site" description="O-linked (GlcNAc) serine" evidence="1">
    <location>
        <position position="529"/>
    </location>
</feature>
<organism>
    <name type="scientific">Rattus norvegicus</name>
    <name type="common">Rat</name>
    <dbReference type="NCBI Taxonomy" id="10116"/>
    <lineage>
        <taxon>Eukaryota</taxon>
        <taxon>Metazoa</taxon>
        <taxon>Chordata</taxon>
        <taxon>Craniata</taxon>
        <taxon>Vertebrata</taxon>
        <taxon>Euteleostomi</taxon>
        <taxon>Mammalia</taxon>
        <taxon>Eutheria</taxon>
        <taxon>Euarchontoglires</taxon>
        <taxon>Glires</taxon>
        <taxon>Rodentia</taxon>
        <taxon>Myomorpha</taxon>
        <taxon>Muroidea</taxon>
        <taxon>Muridae</taxon>
        <taxon>Murinae</taxon>
        <taxon>Rattus</taxon>
    </lineage>
</organism>
<name>PFKAL_RAT</name>